<keyword id="KW-0068">Autocatalytic cleavage</keyword>
<keyword id="KW-0227">DNA damage</keyword>
<keyword id="KW-0234">DNA repair</keyword>
<keyword id="KW-0235">DNA replication</keyword>
<keyword id="KW-0238">DNA-binding</keyword>
<keyword id="KW-0378">Hydrolase</keyword>
<keyword id="KW-1185">Reference proteome</keyword>
<keyword id="KW-0678">Repressor</keyword>
<keyword id="KW-0742">SOS response</keyword>
<keyword id="KW-0804">Transcription</keyword>
<keyword id="KW-0805">Transcription regulation</keyword>
<gene>
    <name evidence="1" type="primary">lexA</name>
    <name type="ordered locus">Sden_3515</name>
</gene>
<proteinExistence type="inferred from homology"/>
<evidence type="ECO:0000255" key="1">
    <source>
        <dbReference type="HAMAP-Rule" id="MF_00015"/>
    </source>
</evidence>
<comment type="function">
    <text evidence="1">Represses a number of genes involved in the response to DNA damage (SOS response), including recA and lexA. In the presence of single-stranded DNA, RecA interacts with LexA causing an autocatalytic cleavage which disrupts the DNA-binding part of LexA, leading to derepression of the SOS regulon and eventually DNA repair.</text>
</comment>
<comment type="catalytic activity">
    <reaction evidence="1">
        <text>Hydrolysis of Ala-|-Gly bond in repressor LexA.</text>
        <dbReference type="EC" id="3.4.21.88"/>
    </reaction>
</comment>
<comment type="subunit">
    <text evidence="1">Homodimer.</text>
</comment>
<comment type="similarity">
    <text evidence="1">Belongs to the peptidase S24 family.</text>
</comment>
<protein>
    <recommendedName>
        <fullName evidence="1">LexA repressor</fullName>
        <ecNumber evidence="1">3.4.21.88</ecNumber>
    </recommendedName>
</protein>
<sequence length="205" mass="22600">MRPLTPRQTEILELIKRNIADTGMPPTRAEIATRLGFKSANAAEEHLKALAKKGCIEIMPGTSRGIRLTQEDAEVELGLPLIGQVAAGEPILAQEHVEQYFQVDPHMFKPAANFLLRVRGDSMKNIGILEGDLLAVHKMQEAKNGQVVVARVEDDVTVKRFEKKGNVIYLHAENEDYAPIKVDLTCQSLTIEGLAVGVIRNGAWL</sequence>
<name>LEXA_SHEDO</name>
<reference key="1">
    <citation type="submission" date="2006-03" db="EMBL/GenBank/DDBJ databases">
        <title>Complete sequence of Shewanella denitrificans OS217.</title>
        <authorList>
            <consortium name="US DOE Joint Genome Institute"/>
            <person name="Copeland A."/>
            <person name="Lucas S."/>
            <person name="Lapidus A."/>
            <person name="Barry K."/>
            <person name="Detter J.C."/>
            <person name="Glavina del Rio T."/>
            <person name="Hammon N."/>
            <person name="Israni S."/>
            <person name="Dalin E."/>
            <person name="Tice H."/>
            <person name="Pitluck S."/>
            <person name="Brettin T."/>
            <person name="Bruce D."/>
            <person name="Han C."/>
            <person name="Tapia R."/>
            <person name="Gilna P."/>
            <person name="Kiss H."/>
            <person name="Schmutz J."/>
            <person name="Larimer F."/>
            <person name="Land M."/>
            <person name="Hauser L."/>
            <person name="Kyrpides N."/>
            <person name="Lykidis A."/>
            <person name="Richardson P."/>
        </authorList>
    </citation>
    <scope>NUCLEOTIDE SEQUENCE [LARGE SCALE GENOMIC DNA]</scope>
    <source>
        <strain>OS217 / ATCC BAA-1090 / DSM 15013</strain>
    </source>
</reference>
<accession>Q12ID6</accession>
<dbReference type="EC" id="3.4.21.88" evidence="1"/>
<dbReference type="EMBL" id="CP000302">
    <property type="protein sequence ID" value="ABE56790.1"/>
    <property type="molecule type" value="Genomic_DNA"/>
</dbReference>
<dbReference type="RefSeq" id="WP_011497930.1">
    <property type="nucleotide sequence ID" value="NC_007954.1"/>
</dbReference>
<dbReference type="SMR" id="Q12ID6"/>
<dbReference type="STRING" id="318161.Sden_3515"/>
<dbReference type="MEROPS" id="S24.001"/>
<dbReference type="KEGG" id="sdn:Sden_3515"/>
<dbReference type="eggNOG" id="COG1974">
    <property type="taxonomic scope" value="Bacteria"/>
</dbReference>
<dbReference type="HOGENOM" id="CLU_066192_45_3_6"/>
<dbReference type="OrthoDB" id="9802364at2"/>
<dbReference type="Proteomes" id="UP000001982">
    <property type="component" value="Chromosome"/>
</dbReference>
<dbReference type="GO" id="GO:0003677">
    <property type="term" value="F:DNA binding"/>
    <property type="evidence" value="ECO:0007669"/>
    <property type="project" value="UniProtKB-UniRule"/>
</dbReference>
<dbReference type="GO" id="GO:0004252">
    <property type="term" value="F:serine-type endopeptidase activity"/>
    <property type="evidence" value="ECO:0007669"/>
    <property type="project" value="UniProtKB-UniRule"/>
</dbReference>
<dbReference type="GO" id="GO:0006281">
    <property type="term" value="P:DNA repair"/>
    <property type="evidence" value="ECO:0007669"/>
    <property type="project" value="UniProtKB-UniRule"/>
</dbReference>
<dbReference type="GO" id="GO:0006260">
    <property type="term" value="P:DNA replication"/>
    <property type="evidence" value="ECO:0007669"/>
    <property type="project" value="UniProtKB-UniRule"/>
</dbReference>
<dbReference type="GO" id="GO:0045892">
    <property type="term" value="P:negative regulation of DNA-templated transcription"/>
    <property type="evidence" value="ECO:0007669"/>
    <property type="project" value="UniProtKB-UniRule"/>
</dbReference>
<dbReference type="GO" id="GO:0006508">
    <property type="term" value="P:proteolysis"/>
    <property type="evidence" value="ECO:0007669"/>
    <property type="project" value="InterPro"/>
</dbReference>
<dbReference type="GO" id="GO:0009432">
    <property type="term" value="P:SOS response"/>
    <property type="evidence" value="ECO:0007669"/>
    <property type="project" value="UniProtKB-UniRule"/>
</dbReference>
<dbReference type="CDD" id="cd06529">
    <property type="entry name" value="S24_LexA-like"/>
    <property type="match status" value="1"/>
</dbReference>
<dbReference type="FunFam" id="1.10.10.10:FF:000009">
    <property type="entry name" value="LexA repressor"/>
    <property type="match status" value="1"/>
</dbReference>
<dbReference type="FunFam" id="2.10.109.10:FF:000001">
    <property type="entry name" value="LexA repressor"/>
    <property type="match status" value="1"/>
</dbReference>
<dbReference type="Gene3D" id="2.10.109.10">
    <property type="entry name" value="Umud Fragment, subunit A"/>
    <property type="match status" value="1"/>
</dbReference>
<dbReference type="Gene3D" id="1.10.10.10">
    <property type="entry name" value="Winged helix-like DNA-binding domain superfamily/Winged helix DNA-binding domain"/>
    <property type="match status" value="1"/>
</dbReference>
<dbReference type="HAMAP" id="MF_00015">
    <property type="entry name" value="LexA"/>
    <property type="match status" value="1"/>
</dbReference>
<dbReference type="InterPro" id="IPR006200">
    <property type="entry name" value="LexA"/>
</dbReference>
<dbReference type="InterPro" id="IPR039418">
    <property type="entry name" value="LexA-like"/>
</dbReference>
<dbReference type="InterPro" id="IPR036286">
    <property type="entry name" value="LexA/Signal_pep-like_sf"/>
</dbReference>
<dbReference type="InterPro" id="IPR006199">
    <property type="entry name" value="LexA_DNA-bd_dom"/>
</dbReference>
<dbReference type="InterPro" id="IPR050077">
    <property type="entry name" value="LexA_repressor"/>
</dbReference>
<dbReference type="InterPro" id="IPR006197">
    <property type="entry name" value="Peptidase_S24_LexA"/>
</dbReference>
<dbReference type="InterPro" id="IPR015927">
    <property type="entry name" value="Peptidase_S24_S26A/B/C"/>
</dbReference>
<dbReference type="InterPro" id="IPR036388">
    <property type="entry name" value="WH-like_DNA-bd_sf"/>
</dbReference>
<dbReference type="InterPro" id="IPR036390">
    <property type="entry name" value="WH_DNA-bd_sf"/>
</dbReference>
<dbReference type="NCBIfam" id="TIGR00498">
    <property type="entry name" value="lexA"/>
    <property type="match status" value="1"/>
</dbReference>
<dbReference type="PANTHER" id="PTHR33516">
    <property type="entry name" value="LEXA REPRESSOR"/>
    <property type="match status" value="1"/>
</dbReference>
<dbReference type="PANTHER" id="PTHR33516:SF2">
    <property type="entry name" value="LEXA REPRESSOR-RELATED"/>
    <property type="match status" value="1"/>
</dbReference>
<dbReference type="Pfam" id="PF01726">
    <property type="entry name" value="LexA_DNA_bind"/>
    <property type="match status" value="1"/>
</dbReference>
<dbReference type="Pfam" id="PF00717">
    <property type="entry name" value="Peptidase_S24"/>
    <property type="match status" value="1"/>
</dbReference>
<dbReference type="PRINTS" id="PR00726">
    <property type="entry name" value="LEXASERPTASE"/>
</dbReference>
<dbReference type="SUPFAM" id="SSF51306">
    <property type="entry name" value="LexA/Signal peptidase"/>
    <property type="match status" value="1"/>
</dbReference>
<dbReference type="SUPFAM" id="SSF46785">
    <property type="entry name" value="Winged helix' DNA-binding domain"/>
    <property type="match status" value="1"/>
</dbReference>
<feature type="chain" id="PRO_1000001335" description="LexA repressor">
    <location>
        <begin position="1"/>
        <end position="205"/>
    </location>
</feature>
<feature type="DNA-binding region" description="H-T-H motif" evidence="1">
    <location>
        <begin position="28"/>
        <end position="48"/>
    </location>
</feature>
<feature type="active site" description="For autocatalytic cleavage activity" evidence="1">
    <location>
        <position position="122"/>
    </location>
</feature>
<feature type="active site" description="For autocatalytic cleavage activity" evidence="1">
    <location>
        <position position="159"/>
    </location>
</feature>
<feature type="site" description="Cleavage; by autolysis" evidence="1">
    <location>
        <begin position="87"/>
        <end position="88"/>
    </location>
</feature>
<organism>
    <name type="scientific">Shewanella denitrificans (strain OS217 / ATCC BAA-1090 / DSM 15013)</name>
    <dbReference type="NCBI Taxonomy" id="318161"/>
    <lineage>
        <taxon>Bacteria</taxon>
        <taxon>Pseudomonadati</taxon>
        <taxon>Pseudomonadota</taxon>
        <taxon>Gammaproteobacteria</taxon>
        <taxon>Alteromonadales</taxon>
        <taxon>Shewanellaceae</taxon>
        <taxon>Shewanella</taxon>
    </lineage>
</organism>